<accession>B7L4H2</accession>
<organism>
    <name type="scientific">Escherichia coli (strain 55989 / EAEC)</name>
    <dbReference type="NCBI Taxonomy" id="585055"/>
    <lineage>
        <taxon>Bacteria</taxon>
        <taxon>Pseudomonadati</taxon>
        <taxon>Pseudomonadota</taxon>
        <taxon>Gammaproteobacteria</taxon>
        <taxon>Enterobacterales</taxon>
        <taxon>Enterobacteriaceae</taxon>
        <taxon>Escherichia</taxon>
    </lineage>
</organism>
<evidence type="ECO:0000255" key="1">
    <source>
        <dbReference type="HAMAP-Rule" id="MF_00199"/>
    </source>
</evidence>
<comment type="function">
    <text evidence="1">Hydrolyzes diadenosine 5',5'''-P1,P4-tetraphosphate to yield ADP.</text>
</comment>
<comment type="catalytic activity">
    <reaction evidence="1">
        <text>P(1),P(4)-bis(5'-adenosyl) tetraphosphate + H2O = 2 ADP + 2 H(+)</text>
        <dbReference type="Rhea" id="RHEA:24252"/>
        <dbReference type="ChEBI" id="CHEBI:15377"/>
        <dbReference type="ChEBI" id="CHEBI:15378"/>
        <dbReference type="ChEBI" id="CHEBI:58141"/>
        <dbReference type="ChEBI" id="CHEBI:456216"/>
        <dbReference type="EC" id="3.6.1.41"/>
    </reaction>
</comment>
<comment type="similarity">
    <text evidence="1">Belongs to the Ap4A hydrolase family.</text>
</comment>
<dbReference type="EC" id="3.6.1.41" evidence="1"/>
<dbReference type="EMBL" id="CU928145">
    <property type="protein sequence ID" value="CAU95936.1"/>
    <property type="molecule type" value="Genomic_DNA"/>
</dbReference>
<dbReference type="RefSeq" id="WP_000257192.1">
    <property type="nucleotide sequence ID" value="NC_011748.1"/>
</dbReference>
<dbReference type="SMR" id="B7L4H2"/>
<dbReference type="GeneID" id="93777386"/>
<dbReference type="KEGG" id="eck:EC55989_0049"/>
<dbReference type="HOGENOM" id="CLU_056184_2_0_6"/>
<dbReference type="Proteomes" id="UP000000746">
    <property type="component" value="Chromosome"/>
</dbReference>
<dbReference type="GO" id="GO:0008803">
    <property type="term" value="F:bis(5'-nucleosyl)-tetraphosphatase (symmetrical) activity"/>
    <property type="evidence" value="ECO:0007669"/>
    <property type="project" value="UniProtKB-UniRule"/>
</dbReference>
<dbReference type="CDD" id="cd07422">
    <property type="entry name" value="MPP_ApaH"/>
    <property type="match status" value="1"/>
</dbReference>
<dbReference type="FunFam" id="3.60.21.10:FF:000013">
    <property type="entry name" value="Bis(5'-nucleosyl)-tetraphosphatase, symmetrical"/>
    <property type="match status" value="1"/>
</dbReference>
<dbReference type="Gene3D" id="3.60.21.10">
    <property type="match status" value="1"/>
</dbReference>
<dbReference type="HAMAP" id="MF_00199">
    <property type="entry name" value="ApaH"/>
    <property type="match status" value="1"/>
</dbReference>
<dbReference type="InterPro" id="IPR004617">
    <property type="entry name" value="ApaH"/>
</dbReference>
<dbReference type="InterPro" id="IPR004843">
    <property type="entry name" value="Calcineurin-like_PHP_ApaH"/>
</dbReference>
<dbReference type="InterPro" id="IPR029052">
    <property type="entry name" value="Metallo-depent_PP-like"/>
</dbReference>
<dbReference type="NCBIfam" id="TIGR00668">
    <property type="entry name" value="apaH"/>
    <property type="match status" value="1"/>
</dbReference>
<dbReference type="NCBIfam" id="NF001204">
    <property type="entry name" value="PRK00166.1"/>
    <property type="match status" value="1"/>
</dbReference>
<dbReference type="PANTHER" id="PTHR40942">
    <property type="match status" value="1"/>
</dbReference>
<dbReference type="PANTHER" id="PTHR40942:SF4">
    <property type="entry name" value="CYTOCHROME C5"/>
    <property type="match status" value="1"/>
</dbReference>
<dbReference type="Pfam" id="PF00149">
    <property type="entry name" value="Metallophos"/>
    <property type="match status" value="1"/>
</dbReference>
<dbReference type="PIRSF" id="PIRSF000903">
    <property type="entry name" value="B5n-ttraPtase_sm"/>
    <property type="match status" value="1"/>
</dbReference>
<dbReference type="SUPFAM" id="SSF56300">
    <property type="entry name" value="Metallo-dependent phosphatases"/>
    <property type="match status" value="1"/>
</dbReference>
<keyword id="KW-0378">Hydrolase</keyword>
<keyword id="KW-1185">Reference proteome</keyword>
<reference key="1">
    <citation type="journal article" date="2009" name="PLoS Genet.">
        <title>Organised genome dynamics in the Escherichia coli species results in highly diverse adaptive paths.</title>
        <authorList>
            <person name="Touchon M."/>
            <person name="Hoede C."/>
            <person name="Tenaillon O."/>
            <person name="Barbe V."/>
            <person name="Baeriswyl S."/>
            <person name="Bidet P."/>
            <person name="Bingen E."/>
            <person name="Bonacorsi S."/>
            <person name="Bouchier C."/>
            <person name="Bouvet O."/>
            <person name="Calteau A."/>
            <person name="Chiapello H."/>
            <person name="Clermont O."/>
            <person name="Cruveiller S."/>
            <person name="Danchin A."/>
            <person name="Diard M."/>
            <person name="Dossat C."/>
            <person name="Karoui M.E."/>
            <person name="Frapy E."/>
            <person name="Garry L."/>
            <person name="Ghigo J.M."/>
            <person name="Gilles A.M."/>
            <person name="Johnson J."/>
            <person name="Le Bouguenec C."/>
            <person name="Lescat M."/>
            <person name="Mangenot S."/>
            <person name="Martinez-Jehanne V."/>
            <person name="Matic I."/>
            <person name="Nassif X."/>
            <person name="Oztas S."/>
            <person name="Petit M.A."/>
            <person name="Pichon C."/>
            <person name="Rouy Z."/>
            <person name="Ruf C.S."/>
            <person name="Schneider D."/>
            <person name="Tourret J."/>
            <person name="Vacherie B."/>
            <person name="Vallenet D."/>
            <person name="Medigue C."/>
            <person name="Rocha E.P.C."/>
            <person name="Denamur E."/>
        </authorList>
    </citation>
    <scope>NUCLEOTIDE SEQUENCE [LARGE SCALE GENOMIC DNA]</scope>
    <source>
        <strain>55989 / EAEC</strain>
    </source>
</reference>
<name>APAH_ECO55</name>
<feature type="chain" id="PRO_1000124451" description="Bis(5'-nucleosyl)-tetraphosphatase, symmetrical">
    <location>
        <begin position="1"/>
        <end position="280"/>
    </location>
</feature>
<sequence length="280" mass="31297">MATYLIGDVHGCYDELIALLHKVEFTPGKDTLWLTGDLVARGPGSLDVLRYVKSLGDSVRLVLGNHDLHLLAVFAGISRNKPKDRLTPLLEAPDADELLNWLRRQPLLQIDEEKKLVMAHAGITPQWDLQTAKECARDVEAVLSSDSYPFFLDAMYGDMPNNWSPELRGLGRLRFITNAFTRMRFCFPNGQLDMYSKESPEEAPAPLKPWFAIPGPVAEEYSIAFGHWASLEGKGTPEGIYALDTGCCWGGTLTCLRWEDKQYFVQPSNRHKDLGEAAAS</sequence>
<gene>
    <name evidence="1" type="primary">apaH</name>
    <name type="ordered locus">EC55989_0049</name>
</gene>
<protein>
    <recommendedName>
        <fullName evidence="1">Bis(5'-nucleosyl)-tetraphosphatase, symmetrical</fullName>
        <ecNumber evidence="1">3.6.1.41</ecNumber>
    </recommendedName>
    <alternativeName>
        <fullName evidence="1">Ap4A hydrolase</fullName>
    </alternativeName>
    <alternativeName>
        <fullName evidence="1">Diadenosine 5',5'''-P1,P4-tetraphosphate pyrophosphohydrolase</fullName>
    </alternativeName>
    <alternativeName>
        <fullName evidence="1">Diadenosine tetraphosphatase</fullName>
    </alternativeName>
</protein>
<proteinExistence type="inferred from homology"/>